<proteinExistence type="inferred from homology"/>
<organism>
    <name type="scientific">Lawsonia intracellularis (strain PHE/MN1-00)</name>
    <dbReference type="NCBI Taxonomy" id="363253"/>
    <lineage>
        <taxon>Bacteria</taxon>
        <taxon>Pseudomonadati</taxon>
        <taxon>Thermodesulfobacteriota</taxon>
        <taxon>Desulfovibrionia</taxon>
        <taxon>Desulfovibrionales</taxon>
        <taxon>Desulfovibrionaceae</taxon>
        <taxon>Lawsonia</taxon>
    </lineage>
</organism>
<name>GSA_LAWIP</name>
<accession>Q1MPW7</accession>
<feature type="chain" id="PRO_0000300921" description="Glutamate-1-semialdehyde 2,1-aminomutase">
    <location>
        <begin position="1"/>
        <end position="430"/>
    </location>
</feature>
<feature type="modified residue" description="N6-(pyridoxal phosphate)lysine" evidence="1">
    <location>
        <position position="267"/>
    </location>
</feature>
<dbReference type="EC" id="5.4.3.8" evidence="1"/>
<dbReference type="EMBL" id="AM180252">
    <property type="protein sequence ID" value="CAJ54960.1"/>
    <property type="molecule type" value="Genomic_DNA"/>
</dbReference>
<dbReference type="RefSeq" id="WP_011526989.1">
    <property type="nucleotide sequence ID" value="NC_008011.1"/>
</dbReference>
<dbReference type="SMR" id="Q1MPW7"/>
<dbReference type="STRING" id="363253.LI0906"/>
<dbReference type="KEGG" id="lip:LI0906"/>
<dbReference type="eggNOG" id="COG0001">
    <property type="taxonomic scope" value="Bacteria"/>
</dbReference>
<dbReference type="HOGENOM" id="CLU_016922_1_5_7"/>
<dbReference type="OrthoDB" id="9801052at2"/>
<dbReference type="UniPathway" id="UPA00251">
    <property type="reaction ID" value="UER00317"/>
</dbReference>
<dbReference type="Proteomes" id="UP000002430">
    <property type="component" value="Chromosome"/>
</dbReference>
<dbReference type="GO" id="GO:0005737">
    <property type="term" value="C:cytoplasm"/>
    <property type="evidence" value="ECO:0007669"/>
    <property type="project" value="UniProtKB-SubCell"/>
</dbReference>
<dbReference type="GO" id="GO:0042286">
    <property type="term" value="F:glutamate-1-semialdehyde 2,1-aminomutase activity"/>
    <property type="evidence" value="ECO:0007669"/>
    <property type="project" value="UniProtKB-UniRule"/>
</dbReference>
<dbReference type="GO" id="GO:0030170">
    <property type="term" value="F:pyridoxal phosphate binding"/>
    <property type="evidence" value="ECO:0007669"/>
    <property type="project" value="InterPro"/>
</dbReference>
<dbReference type="GO" id="GO:0008483">
    <property type="term" value="F:transaminase activity"/>
    <property type="evidence" value="ECO:0007669"/>
    <property type="project" value="InterPro"/>
</dbReference>
<dbReference type="GO" id="GO:0006782">
    <property type="term" value="P:protoporphyrinogen IX biosynthetic process"/>
    <property type="evidence" value="ECO:0007669"/>
    <property type="project" value="UniProtKB-UniRule"/>
</dbReference>
<dbReference type="CDD" id="cd00610">
    <property type="entry name" value="OAT_like"/>
    <property type="match status" value="1"/>
</dbReference>
<dbReference type="FunFam" id="3.40.640.10:FF:000021">
    <property type="entry name" value="Glutamate-1-semialdehyde 2,1-aminomutase"/>
    <property type="match status" value="1"/>
</dbReference>
<dbReference type="Gene3D" id="3.90.1150.10">
    <property type="entry name" value="Aspartate Aminotransferase, domain 1"/>
    <property type="match status" value="1"/>
</dbReference>
<dbReference type="Gene3D" id="3.40.640.10">
    <property type="entry name" value="Type I PLP-dependent aspartate aminotransferase-like (Major domain)"/>
    <property type="match status" value="1"/>
</dbReference>
<dbReference type="HAMAP" id="MF_00375">
    <property type="entry name" value="HemL_aminotrans_3"/>
    <property type="match status" value="1"/>
</dbReference>
<dbReference type="InterPro" id="IPR004639">
    <property type="entry name" value="4pyrrol_synth_GluAld_NH2Trfase"/>
</dbReference>
<dbReference type="InterPro" id="IPR005814">
    <property type="entry name" value="Aminotrans_3"/>
</dbReference>
<dbReference type="InterPro" id="IPR049704">
    <property type="entry name" value="Aminotrans_3_PPA_site"/>
</dbReference>
<dbReference type="InterPro" id="IPR015424">
    <property type="entry name" value="PyrdxlP-dep_Trfase"/>
</dbReference>
<dbReference type="InterPro" id="IPR015421">
    <property type="entry name" value="PyrdxlP-dep_Trfase_major"/>
</dbReference>
<dbReference type="InterPro" id="IPR015422">
    <property type="entry name" value="PyrdxlP-dep_Trfase_small"/>
</dbReference>
<dbReference type="NCBIfam" id="TIGR00713">
    <property type="entry name" value="hemL"/>
    <property type="match status" value="1"/>
</dbReference>
<dbReference type="NCBIfam" id="NF000818">
    <property type="entry name" value="PRK00062.1"/>
    <property type="match status" value="1"/>
</dbReference>
<dbReference type="PANTHER" id="PTHR43713">
    <property type="entry name" value="GLUTAMATE-1-SEMIALDEHYDE 2,1-AMINOMUTASE"/>
    <property type="match status" value="1"/>
</dbReference>
<dbReference type="PANTHER" id="PTHR43713:SF3">
    <property type="entry name" value="GLUTAMATE-1-SEMIALDEHYDE 2,1-AMINOMUTASE 1, CHLOROPLASTIC-RELATED"/>
    <property type="match status" value="1"/>
</dbReference>
<dbReference type="Pfam" id="PF00202">
    <property type="entry name" value="Aminotran_3"/>
    <property type="match status" value="1"/>
</dbReference>
<dbReference type="SUPFAM" id="SSF53383">
    <property type="entry name" value="PLP-dependent transferases"/>
    <property type="match status" value="1"/>
</dbReference>
<dbReference type="PROSITE" id="PS00600">
    <property type="entry name" value="AA_TRANSFER_CLASS_3"/>
    <property type="match status" value="1"/>
</dbReference>
<comment type="catalytic activity">
    <reaction evidence="1">
        <text>(S)-4-amino-5-oxopentanoate = 5-aminolevulinate</text>
        <dbReference type="Rhea" id="RHEA:14265"/>
        <dbReference type="ChEBI" id="CHEBI:57501"/>
        <dbReference type="ChEBI" id="CHEBI:356416"/>
        <dbReference type="EC" id="5.4.3.8"/>
    </reaction>
</comment>
<comment type="cofactor">
    <cofactor evidence="1">
        <name>pyridoxal 5'-phosphate</name>
        <dbReference type="ChEBI" id="CHEBI:597326"/>
    </cofactor>
</comment>
<comment type="pathway">
    <text evidence="1">Porphyrin-containing compound metabolism; protoporphyrin-IX biosynthesis; 5-aminolevulinate from L-glutamyl-tRNA(Glu): step 2/2.</text>
</comment>
<comment type="subunit">
    <text evidence="1">Homodimer.</text>
</comment>
<comment type="subcellular location">
    <subcellularLocation>
        <location evidence="1">Cytoplasm</location>
    </subcellularLocation>
</comment>
<comment type="similarity">
    <text evidence="1">Belongs to the class-III pyridoxal-phosphate-dependent aminotransferase family. HemL subfamily.</text>
</comment>
<sequence>MQEESSKELYSKAVKLIPGGVNSPVRACRNVGCEPVFIESAKGAYLTTVDGQELLDFVLSWGAIILGHTNSTVTNAIKKAASNGTTFGAPCKAEVLLAKEIIDAFPGMDMIRMVSSGTEATMSALRLARGVTGRNKVLKFIGCYHGHADPFLASAGSGVATLSIPGTPGVPEVTVRDTLLAPYNDLSTVKDLFVMYGKDLAAVFVEPIAANMGLIPPKEGFLKGLRALCDAHGTLLIMDEVITGFRVAYGGAQTRFDITPDLTTLGKIIGGGLPIGAYGGKAKYMEHIAPLGEIYQAGTLSGNPLVMTAGFETLQLLKDINYTILEKQVATFANELEVILKDKGVPVQVSNFASMFTVFFTNNELKSFDDVKTTNTQLYSILFRSMQKNNIFLVPSPFETNMVSFAHKEKEFEKALIAAKKIMFNITDVN</sequence>
<keyword id="KW-0963">Cytoplasm</keyword>
<keyword id="KW-0413">Isomerase</keyword>
<keyword id="KW-0627">Porphyrin biosynthesis</keyword>
<keyword id="KW-0663">Pyridoxal phosphate</keyword>
<keyword id="KW-1185">Reference proteome</keyword>
<evidence type="ECO:0000255" key="1">
    <source>
        <dbReference type="HAMAP-Rule" id="MF_00375"/>
    </source>
</evidence>
<protein>
    <recommendedName>
        <fullName evidence="1">Glutamate-1-semialdehyde 2,1-aminomutase</fullName>
        <shortName evidence="1">GSA</shortName>
        <ecNumber evidence="1">5.4.3.8</ecNumber>
    </recommendedName>
    <alternativeName>
        <fullName evidence="1">Glutamate-1-semialdehyde aminotransferase</fullName>
        <shortName evidence="1">GSA-AT</shortName>
    </alternativeName>
</protein>
<gene>
    <name evidence="1" type="primary">hemL</name>
    <name type="ordered locus">LI0906</name>
</gene>
<reference key="1">
    <citation type="submission" date="2005-11" db="EMBL/GenBank/DDBJ databases">
        <title>The complete genome sequence of Lawsonia intracellularis: the causative agent of proliferative enteropathy.</title>
        <authorList>
            <person name="Kaur K."/>
            <person name="Zhang Q."/>
            <person name="Beckler D."/>
            <person name="Munir S."/>
            <person name="Li L."/>
            <person name="Kinsley K."/>
            <person name="Herron L."/>
            <person name="Peterson A."/>
            <person name="May B."/>
            <person name="Singh S."/>
            <person name="Gebhart C."/>
            <person name="Kapur V."/>
        </authorList>
    </citation>
    <scope>NUCLEOTIDE SEQUENCE [LARGE SCALE GENOMIC DNA]</scope>
    <source>
        <strain>PHE/MN1-00</strain>
    </source>
</reference>